<keyword id="KW-0007">Acetylation</keyword>
<keyword id="KW-0597">Phosphoprotein</keyword>
<keyword id="KW-1185">Reference proteome</keyword>
<organism>
    <name type="scientific">Mus musculus</name>
    <name type="common">Mouse</name>
    <dbReference type="NCBI Taxonomy" id="10090"/>
    <lineage>
        <taxon>Eukaryota</taxon>
        <taxon>Metazoa</taxon>
        <taxon>Chordata</taxon>
        <taxon>Craniata</taxon>
        <taxon>Vertebrata</taxon>
        <taxon>Euteleostomi</taxon>
        <taxon>Mammalia</taxon>
        <taxon>Eutheria</taxon>
        <taxon>Euarchontoglires</taxon>
        <taxon>Glires</taxon>
        <taxon>Rodentia</taxon>
        <taxon>Myomorpha</taxon>
        <taxon>Muroidea</taxon>
        <taxon>Muridae</taxon>
        <taxon>Murinae</taxon>
        <taxon>Mus</taxon>
        <taxon>Mus</taxon>
    </lineage>
</organism>
<dbReference type="EMBL" id="AK030288">
    <property type="protein sequence ID" value="BAC26880.1"/>
    <property type="molecule type" value="mRNA"/>
</dbReference>
<dbReference type="EMBL" id="BC062639">
    <property type="protein sequence ID" value="AAH62639.1"/>
    <property type="molecule type" value="mRNA"/>
</dbReference>
<dbReference type="EMBL" id="AK173047">
    <property type="protein sequence ID" value="BAD32325.1"/>
    <property type="molecule type" value="mRNA"/>
</dbReference>
<dbReference type="CCDS" id="CCDS22685.1"/>
<dbReference type="RefSeq" id="NP_001041608.1">
    <property type="nucleotide sequence ID" value="NM_001048143.2"/>
</dbReference>
<dbReference type="RefSeq" id="NP_766603.1">
    <property type="nucleotide sequence ID" value="NM_173015.3"/>
</dbReference>
<dbReference type="SMR" id="Q8BMQ8"/>
<dbReference type="BioGRID" id="234759">
    <property type="interactions" value="4"/>
</dbReference>
<dbReference type="FunCoup" id="Q8BMQ8">
    <property type="interactions" value="2110"/>
</dbReference>
<dbReference type="IntAct" id="Q8BMQ8">
    <property type="interactions" value="1"/>
</dbReference>
<dbReference type="MINT" id="Q8BMQ8"/>
<dbReference type="STRING" id="10090.ENSMUSP00000045089"/>
<dbReference type="PhosphoSitePlus" id="Q8BMQ8"/>
<dbReference type="SwissPalm" id="Q8BMQ8"/>
<dbReference type="PaxDb" id="10090-ENSMUSP00000045089"/>
<dbReference type="PeptideAtlas" id="Q8BMQ8"/>
<dbReference type="ProteomicsDB" id="290290"/>
<dbReference type="Pumba" id="Q8BMQ8"/>
<dbReference type="Antibodypedia" id="30376">
    <property type="antibodies" value="99 antibodies from 20 providers"/>
</dbReference>
<dbReference type="Ensembl" id="ENSMUST00000035777.10">
    <property type="protein sequence ID" value="ENSMUSP00000045089.9"/>
    <property type="gene ID" value="ENSMUSG00000078908.11"/>
</dbReference>
<dbReference type="Ensembl" id="ENSMUST00000179926.9">
    <property type="protein sequence ID" value="ENSMUSP00000137605.2"/>
    <property type="gene ID" value="ENSMUSG00000078908.11"/>
</dbReference>
<dbReference type="GeneID" id="270096"/>
<dbReference type="KEGG" id="mmu:270096"/>
<dbReference type="UCSC" id="uc009nnn.2">
    <property type="organism name" value="mouse"/>
</dbReference>
<dbReference type="AGR" id="MGI:1923231"/>
<dbReference type="CTD" id="22879"/>
<dbReference type="MGI" id="MGI:1923231">
    <property type="gene designation" value="Mon1b"/>
</dbReference>
<dbReference type="VEuPathDB" id="HostDB:ENSMUSG00000078908"/>
<dbReference type="eggNOG" id="KOG0997">
    <property type="taxonomic scope" value="Eukaryota"/>
</dbReference>
<dbReference type="GeneTree" id="ENSGT00390000006665"/>
<dbReference type="HOGENOM" id="CLU_014574_4_1_1"/>
<dbReference type="InParanoid" id="Q8BMQ8"/>
<dbReference type="OMA" id="TKTCAIT"/>
<dbReference type="OrthoDB" id="272411at2759"/>
<dbReference type="PhylomeDB" id="Q8BMQ8"/>
<dbReference type="TreeFam" id="TF314665"/>
<dbReference type="Reactome" id="R-MMU-8876198">
    <property type="pathway name" value="RAB GEFs exchange GTP for GDP on RABs"/>
</dbReference>
<dbReference type="BioGRID-ORCS" id="270096">
    <property type="hits" value="1 hit in 77 CRISPR screens"/>
</dbReference>
<dbReference type="ChiTaRS" id="Mon1b">
    <property type="organism name" value="mouse"/>
</dbReference>
<dbReference type="PRO" id="PR:Q8BMQ8"/>
<dbReference type="Proteomes" id="UP000000589">
    <property type="component" value="Chromosome 8"/>
</dbReference>
<dbReference type="RNAct" id="Q8BMQ8">
    <property type="molecule type" value="protein"/>
</dbReference>
<dbReference type="Bgee" id="ENSMUSG00000078908">
    <property type="expression patterns" value="Expressed in animal zygote and 214 other cell types or tissues"/>
</dbReference>
<dbReference type="GO" id="GO:0005737">
    <property type="term" value="C:cytoplasm"/>
    <property type="evidence" value="ECO:0000250"/>
    <property type="project" value="UniProtKB"/>
</dbReference>
<dbReference type="GO" id="GO:0035658">
    <property type="term" value="C:Mon1-Ccz1 complex"/>
    <property type="evidence" value="ECO:0000250"/>
    <property type="project" value="UniProtKB"/>
</dbReference>
<dbReference type="GO" id="GO:0019085">
    <property type="term" value="P:early viral transcription"/>
    <property type="evidence" value="ECO:0007669"/>
    <property type="project" value="Ensembl"/>
</dbReference>
<dbReference type="GO" id="GO:0019086">
    <property type="term" value="P:late viral transcription"/>
    <property type="evidence" value="ECO:0007669"/>
    <property type="project" value="Ensembl"/>
</dbReference>
<dbReference type="GO" id="GO:0006623">
    <property type="term" value="P:protein targeting to vacuole"/>
    <property type="evidence" value="ECO:0007669"/>
    <property type="project" value="InterPro"/>
</dbReference>
<dbReference type="GO" id="GO:0016192">
    <property type="term" value="P:vesicle-mediated transport"/>
    <property type="evidence" value="ECO:0007669"/>
    <property type="project" value="InterPro"/>
</dbReference>
<dbReference type="InterPro" id="IPR043972">
    <property type="entry name" value="FUZ/MON1/HPS1_longin_1"/>
</dbReference>
<dbReference type="InterPro" id="IPR043971">
    <property type="entry name" value="FUZ/MON1/HPS1_longin_2"/>
</dbReference>
<dbReference type="InterPro" id="IPR043970">
    <property type="entry name" value="FUZ/MON1/HPS1_longin_3"/>
</dbReference>
<dbReference type="InterPro" id="IPR004353">
    <property type="entry name" value="Mon1"/>
</dbReference>
<dbReference type="PANTHER" id="PTHR13027">
    <property type="entry name" value="SAND PROTEIN-RELATED"/>
    <property type="match status" value="1"/>
</dbReference>
<dbReference type="PANTHER" id="PTHR13027:SF13">
    <property type="entry name" value="VACUOLAR FUSION PROTEIN MON1 HOMOLOG B"/>
    <property type="match status" value="1"/>
</dbReference>
<dbReference type="Pfam" id="PF19036">
    <property type="entry name" value="Fuz_longin_1"/>
    <property type="match status" value="1"/>
</dbReference>
<dbReference type="Pfam" id="PF19037">
    <property type="entry name" value="Fuz_longin_2"/>
    <property type="match status" value="1"/>
</dbReference>
<dbReference type="Pfam" id="PF19038">
    <property type="entry name" value="Fuz_longin_3"/>
    <property type="match status" value="1"/>
</dbReference>
<dbReference type="PRINTS" id="PR01546">
    <property type="entry name" value="YEAST73DUF"/>
</dbReference>
<comment type="subunit">
    <text evidence="1">Interacts with CCNT2; down-regulates CCNT2-mediated activation of viral promoters during herpes simplex virus 1/HHV-1 infection. Found in a complex with RMC1, CCZ1 MON1A and MON1B.</text>
</comment>
<comment type="similarity">
    <text evidence="3">Belongs to the MON1/SAND family.</text>
</comment>
<protein>
    <recommendedName>
        <fullName>Vacuolar fusion protein MON1 homolog B</fullName>
    </recommendedName>
</protein>
<feature type="chain" id="PRO_0000285767" description="Vacuolar fusion protein MON1 homolog B">
    <location>
        <begin position="1"/>
        <end position="553"/>
    </location>
</feature>
<feature type="region of interest" description="Disordered" evidence="2">
    <location>
        <begin position="1"/>
        <end position="111"/>
    </location>
</feature>
<feature type="region of interest" description="Disordered" evidence="2">
    <location>
        <begin position="534"/>
        <end position="553"/>
    </location>
</feature>
<feature type="compositionally biased region" description="Basic and acidic residues" evidence="2">
    <location>
        <begin position="23"/>
        <end position="35"/>
    </location>
</feature>
<feature type="compositionally biased region" description="Polar residues" evidence="2">
    <location>
        <begin position="52"/>
        <end position="72"/>
    </location>
</feature>
<feature type="compositionally biased region" description="Low complexity" evidence="2">
    <location>
        <begin position="78"/>
        <end position="95"/>
    </location>
</feature>
<feature type="compositionally biased region" description="Acidic residues" evidence="2">
    <location>
        <begin position="96"/>
        <end position="108"/>
    </location>
</feature>
<feature type="compositionally biased region" description="Polar residues" evidence="2">
    <location>
        <begin position="541"/>
        <end position="553"/>
    </location>
</feature>
<feature type="modified residue" description="N-acetylmethionine" evidence="1">
    <location>
        <position position="1"/>
    </location>
</feature>
<feature type="modified residue" description="Phosphoserine" evidence="1">
    <location>
        <position position="57"/>
    </location>
</feature>
<evidence type="ECO:0000250" key="1">
    <source>
        <dbReference type="UniProtKB" id="Q7L1V2"/>
    </source>
</evidence>
<evidence type="ECO:0000256" key="2">
    <source>
        <dbReference type="SAM" id="MobiDB-lite"/>
    </source>
</evidence>
<evidence type="ECO:0000305" key="3"/>
<sequence length="553" mass="60016">MEAGGDNAVPAPGGVEDLVDTQFPREEAGDSERVHASTLDPGDGDPEDTGSKDQPSSLLSPLPQTEAASSTCEHWETAAASDSSPPGEPESNSEGQGEDPDDGGDPSDEDWRSQRKHVFVLSEAGKPIYSRYGSVEALSATMGVMTALVSFVQSAGDAIRAIYAEDHKLVFLQQGPLLLVAVSRTPQSAAQLRGELLAVHAQIVSTLTRASVARIFAHKQNYDLRRLLAGSERTLDRLLDSVEQDPGALLLGAVRCVPLARPLRDALGTLLRRCTAPGLALSVLAVGGRLITVAQERNVLAECRLDPADLQLLLDWVGAPAFAAGEAWAPVCLPRFNPDGFFYAYVARLDSMPVCLLLLGTNREAFHAMAACRRLVEDGMHNLGALRTLGEAANFSNGPAASAPAYSVQAVGAPGLRHFLYKPLDIPEQHRQLPQFTSPELEAPYSREEERQRLSDLYHRLHARLHSTSRPLRLIYHVAEKETLLAWVTSKFELYTCLSPLVTKAGAILVVTKLLRWVRKEEDRLFIRYPPKYSTPPSTSADQAPNNGLFTGL</sequence>
<proteinExistence type="evidence at transcript level"/>
<name>MON1B_MOUSE</name>
<reference key="1">
    <citation type="journal article" date="2005" name="Science">
        <title>The transcriptional landscape of the mammalian genome.</title>
        <authorList>
            <person name="Carninci P."/>
            <person name="Kasukawa T."/>
            <person name="Katayama S."/>
            <person name="Gough J."/>
            <person name="Frith M.C."/>
            <person name="Maeda N."/>
            <person name="Oyama R."/>
            <person name="Ravasi T."/>
            <person name="Lenhard B."/>
            <person name="Wells C."/>
            <person name="Kodzius R."/>
            <person name="Shimokawa K."/>
            <person name="Bajic V.B."/>
            <person name="Brenner S.E."/>
            <person name="Batalov S."/>
            <person name="Forrest A.R."/>
            <person name="Zavolan M."/>
            <person name="Davis M.J."/>
            <person name="Wilming L.G."/>
            <person name="Aidinis V."/>
            <person name="Allen J.E."/>
            <person name="Ambesi-Impiombato A."/>
            <person name="Apweiler R."/>
            <person name="Aturaliya R.N."/>
            <person name="Bailey T.L."/>
            <person name="Bansal M."/>
            <person name="Baxter L."/>
            <person name="Beisel K.W."/>
            <person name="Bersano T."/>
            <person name="Bono H."/>
            <person name="Chalk A.M."/>
            <person name="Chiu K.P."/>
            <person name="Choudhary V."/>
            <person name="Christoffels A."/>
            <person name="Clutterbuck D.R."/>
            <person name="Crowe M.L."/>
            <person name="Dalla E."/>
            <person name="Dalrymple B.P."/>
            <person name="de Bono B."/>
            <person name="Della Gatta G."/>
            <person name="di Bernardo D."/>
            <person name="Down T."/>
            <person name="Engstrom P."/>
            <person name="Fagiolini M."/>
            <person name="Faulkner G."/>
            <person name="Fletcher C.F."/>
            <person name="Fukushima T."/>
            <person name="Furuno M."/>
            <person name="Futaki S."/>
            <person name="Gariboldi M."/>
            <person name="Georgii-Hemming P."/>
            <person name="Gingeras T.R."/>
            <person name="Gojobori T."/>
            <person name="Green R.E."/>
            <person name="Gustincich S."/>
            <person name="Harbers M."/>
            <person name="Hayashi Y."/>
            <person name="Hensch T.K."/>
            <person name="Hirokawa N."/>
            <person name="Hill D."/>
            <person name="Huminiecki L."/>
            <person name="Iacono M."/>
            <person name="Ikeo K."/>
            <person name="Iwama A."/>
            <person name="Ishikawa T."/>
            <person name="Jakt M."/>
            <person name="Kanapin A."/>
            <person name="Katoh M."/>
            <person name="Kawasawa Y."/>
            <person name="Kelso J."/>
            <person name="Kitamura H."/>
            <person name="Kitano H."/>
            <person name="Kollias G."/>
            <person name="Krishnan S.P."/>
            <person name="Kruger A."/>
            <person name="Kummerfeld S.K."/>
            <person name="Kurochkin I.V."/>
            <person name="Lareau L.F."/>
            <person name="Lazarevic D."/>
            <person name="Lipovich L."/>
            <person name="Liu J."/>
            <person name="Liuni S."/>
            <person name="McWilliam S."/>
            <person name="Madan Babu M."/>
            <person name="Madera M."/>
            <person name="Marchionni L."/>
            <person name="Matsuda H."/>
            <person name="Matsuzawa S."/>
            <person name="Miki H."/>
            <person name="Mignone F."/>
            <person name="Miyake S."/>
            <person name="Morris K."/>
            <person name="Mottagui-Tabar S."/>
            <person name="Mulder N."/>
            <person name="Nakano N."/>
            <person name="Nakauchi H."/>
            <person name="Ng P."/>
            <person name="Nilsson R."/>
            <person name="Nishiguchi S."/>
            <person name="Nishikawa S."/>
            <person name="Nori F."/>
            <person name="Ohara O."/>
            <person name="Okazaki Y."/>
            <person name="Orlando V."/>
            <person name="Pang K.C."/>
            <person name="Pavan W.J."/>
            <person name="Pavesi G."/>
            <person name="Pesole G."/>
            <person name="Petrovsky N."/>
            <person name="Piazza S."/>
            <person name="Reed J."/>
            <person name="Reid J.F."/>
            <person name="Ring B.Z."/>
            <person name="Ringwald M."/>
            <person name="Rost B."/>
            <person name="Ruan Y."/>
            <person name="Salzberg S.L."/>
            <person name="Sandelin A."/>
            <person name="Schneider C."/>
            <person name="Schoenbach C."/>
            <person name="Sekiguchi K."/>
            <person name="Semple C.A."/>
            <person name="Seno S."/>
            <person name="Sessa L."/>
            <person name="Sheng Y."/>
            <person name="Shibata Y."/>
            <person name="Shimada H."/>
            <person name="Shimada K."/>
            <person name="Silva D."/>
            <person name="Sinclair B."/>
            <person name="Sperling S."/>
            <person name="Stupka E."/>
            <person name="Sugiura K."/>
            <person name="Sultana R."/>
            <person name="Takenaka Y."/>
            <person name="Taki K."/>
            <person name="Tammoja K."/>
            <person name="Tan S.L."/>
            <person name="Tang S."/>
            <person name="Taylor M.S."/>
            <person name="Tegner J."/>
            <person name="Teichmann S.A."/>
            <person name="Ueda H.R."/>
            <person name="van Nimwegen E."/>
            <person name="Verardo R."/>
            <person name="Wei C.L."/>
            <person name="Yagi K."/>
            <person name="Yamanishi H."/>
            <person name="Zabarovsky E."/>
            <person name="Zhu S."/>
            <person name="Zimmer A."/>
            <person name="Hide W."/>
            <person name="Bult C."/>
            <person name="Grimmond S.M."/>
            <person name="Teasdale R.D."/>
            <person name="Liu E.T."/>
            <person name="Brusic V."/>
            <person name="Quackenbush J."/>
            <person name="Wahlestedt C."/>
            <person name="Mattick J.S."/>
            <person name="Hume D.A."/>
            <person name="Kai C."/>
            <person name="Sasaki D."/>
            <person name="Tomaru Y."/>
            <person name="Fukuda S."/>
            <person name="Kanamori-Katayama M."/>
            <person name="Suzuki M."/>
            <person name="Aoki J."/>
            <person name="Arakawa T."/>
            <person name="Iida J."/>
            <person name="Imamura K."/>
            <person name="Itoh M."/>
            <person name="Kato T."/>
            <person name="Kawaji H."/>
            <person name="Kawagashira N."/>
            <person name="Kawashima T."/>
            <person name="Kojima M."/>
            <person name="Kondo S."/>
            <person name="Konno H."/>
            <person name="Nakano K."/>
            <person name="Ninomiya N."/>
            <person name="Nishio T."/>
            <person name="Okada M."/>
            <person name="Plessy C."/>
            <person name="Shibata K."/>
            <person name="Shiraki T."/>
            <person name="Suzuki S."/>
            <person name="Tagami M."/>
            <person name="Waki K."/>
            <person name="Watahiki A."/>
            <person name="Okamura-Oho Y."/>
            <person name="Suzuki H."/>
            <person name="Kawai J."/>
            <person name="Hayashizaki Y."/>
        </authorList>
    </citation>
    <scope>NUCLEOTIDE SEQUENCE [LARGE SCALE MRNA]</scope>
    <source>
        <strain>C57BL/6J</strain>
        <tissue>Ovary</tissue>
        <tissue>Uterus</tissue>
    </source>
</reference>
<reference key="2">
    <citation type="journal article" date="2004" name="Genome Res.">
        <title>The status, quality, and expansion of the NIH full-length cDNA project: the Mammalian Gene Collection (MGC).</title>
        <authorList>
            <consortium name="The MGC Project Team"/>
        </authorList>
    </citation>
    <scope>NUCLEOTIDE SEQUENCE [LARGE SCALE MRNA] OF 2-553</scope>
    <source>
        <strain>C57BL/6J</strain>
        <tissue>Brain</tissue>
    </source>
</reference>
<reference key="3">
    <citation type="journal article" date="2004" name="DNA Res.">
        <title>Prediction of the coding sequences of mouse homologues of KIAA gene: IV. The complete nucleotide sequences of 500 mouse KIAA-homologous cDNAs identified by screening of terminal sequences of cDNA clones randomly sampled from size-fractionated libraries.</title>
        <authorList>
            <person name="Okazaki N."/>
            <person name="Kikuno R."/>
            <person name="Ohara R."/>
            <person name="Inamoto S."/>
            <person name="Koseki H."/>
            <person name="Hiraoka S."/>
            <person name="Saga Y."/>
            <person name="Seino S."/>
            <person name="Nishimura M."/>
            <person name="Kaisho T."/>
            <person name="Hoshino K."/>
            <person name="Kitamura H."/>
            <person name="Nagase T."/>
            <person name="Ohara O."/>
            <person name="Koga H."/>
        </authorList>
    </citation>
    <scope>NUCLEOTIDE SEQUENCE [LARGE SCALE MRNA] OF 3-553</scope>
    <source>
        <tissue>Fetal brain</tissue>
    </source>
</reference>
<gene>
    <name type="primary">Mon1b</name>
    <name type="synonym">Kiaa0872</name>
</gene>
<accession>Q8BMQ8</accession>
<accession>Q69ZX1</accession>
<accession>Q6P5V5</accession>